<sequence>MIPDVSQALAWLEKHPQALKGIQRGLERETLRVNADGTLATTGHPEALGSALTHKWITTDFAEALLEFITPVDGDIQHMLTFMRDLHRYTARKLGDERMWPLSMPCYIAEGQDIELAQYGTSNTGRFKTLYREGLKNRYGALMQTISGVHYNFSLPMAFWQAKCGVTEGEAAKEKISAGYFRLIRNYYRFGWVIPYLFGASPAICSSFLQGKPTTLPFEKTDCGMYYLPYATSLRLSDLGYTNKSQSNLGITFNDLHEYVAGLKRAIKTPSEEYARIGVEKDGKRLQINSNVLQIENELYAPIRPKRVTRSGESPSDALLRGGIEYIEVRSLDINPFSPIGVDEQQLRFLDLFMVWCVLADAPEMSSDELLCTRTNWNRVILEGRKPGLTLGIGCETAQFPLPKVGKDLFRDLKRVAQTLDSIHGGEEYQKVCDELVACFDNPELTFSARILRSMIDEGIGGTGKAFGEAYRNLLREEPLEILQEEEFIAERDASVRRQQEIEAADTEPFAAWLAKHA</sequence>
<name>GSH1_SALPC</name>
<organism>
    <name type="scientific">Salmonella paratyphi C (strain RKS4594)</name>
    <dbReference type="NCBI Taxonomy" id="476213"/>
    <lineage>
        <taxon>Bacteria</taxon>
        <taxon>Pseudomonadati</taxon>
        <taxon>Pseudomonadota</taxon>
        <taxon>Gammaproteobacteria</taxon>
        <taxon>Enterobacterales</taxon>
        <taxon>Enterobacteriaceae</taxon>
        <taxon>Salmonella</taxon>
    </lineage>
</organism>
<gene>
    <name evidence="1" type="primary">gshA</name>
    <name type="ordered locus">SPC_2864</name>
</gene>
<accession>C0PWL7</accession>
<evidence type="ECO:0000255" key="1">
    <source>
        <dbReference type="HAMAP-Rule" id="MF_00578"/>
    </source>
</evidence>
<proteinExistence type="inferred from homology"/>
<feature type="chain" id="PRO_1000146880" description="Glutamate--cysteine ligase">
    <location>
        <begin position="1"/>
        <end position="518"/>
    </location>
</feature>
<comment type="catalytic activity">
    <reaction evidence="1">
        <text>L-cysteine + L-glutamate + ATP = gamma-L-glutamyl-L-cysteine + ADP + phosphate + H(+)</text>
        <dbReference type="Rhea" id="RHEA:13285"/>
        <dbReference type="ChEBI" id="CHEBI:15378"/>
        <dbReference type="ChEBI" id="CHEBI:29985"/>
        <dbReference type="ChEBI" id="CHEBI:30616"/>
        <dbReference type="ChEBI" id="CHEBI:35235"/>
        <dbReference type="ChEBI" id="CHEBI:43474"/>
        <dbReference type="ChEBI" id="CHEBI:58173"/>
        <dbReference type="ChEBI" id="CHEBI:456216"/>
        <dbReference type="EC" id="6.3.2.2"/>
    </reaction>
</comment>
<comment type="pathway">
    <text evidence="1">Sulfur metabolism; glutathione biosynthesis; glutathione from L-cysteine and L-glutamate: step 1/2.</text>
</comment>
<comment type="similarity">
    <text evidence="1">Belongs to the glutamate--cysteine ligase type 1 family. Type 1 subfamily.</text>
</comment>
<keyword id="KW-0067">ATP-binding</keyword>
<keyword id="KW-0317">Glutathione biosynthesis</keyword>
<keyword id="KW-0436">Ligase</keyword>
<keyword id="KW-0547">Nucleotide-binding</keyword>
<protein>
    <recommendedName>
        <fullName evidence="1">Glutamate--cysteine ligase</fullName>
        <ecNumber evidence="1">6.3.2.2</ecNumber>
    </recommendedName>
    <alternativeName>
        <fullName evidence="1">Gamma-ECS</fullName>
        <shortName evidence="1">GCS</shortName>
    </alternativeName>
    <alternativeName>
        <fullName evidence="1">Gamma-glutamylcysteine synthetase</fullName>
    </alternativeName>
</protein>
<reference key="1">
    <citation type="journal article" date="2009" name="PLoS ONE">
        <title>Salmonella paratyphi C: genetic divergence from Salmonella choleraesuis and pathogenic convergence with Salmonella typhi.</title>
        <authorList>
            <person name="Liu W.-Q."/>
            <person name="Feng Y."/>
            <person name="Wang Y."/>
            <person name="Zou Q.-H."/>
            <person name="Chen F."/>
            <person name="Guo J.-T."/>
            <person name="Peng Y.-H."/>
            <person name="Jin Y."/>
            <person name="Li Y.-G."/>
            <person name="Hu S.-N."/>
            <person name="Johnston R.N."/>
            <person name="Liu G.-R."/>
            <person name="Liu S.-L."/>
        </authorList>
    </citation>
    <scope>NUCLEOTIDE SEQUENCE [LARGE SCALE GENOMIC DNA]</scope>
    <source>
        <strain>RKS4594</strain>
    </source>
</reference>
<dbReference type="EC" id="6.3.2.2" evidence="1"/>
<dbReference type="EMBL" id="CP000857">
    <property type="protein sequence ID" value="ACN46959.1"/>
    <property type="molecule type" value="Genomic_DNA"/>
</dbReference>
<dbReference type="RefSeq" id="WP_000611818.1">
    <property type="nucleotide sequence ID" value="NC_012125.1"/>
</dbReference>
<dbReference type="SMR" id="C0PWL7"/>
<dbReference type="KEGG" id="sei:SPC_2864"/>
<dbReference type="HOGENOM" id="CLU_020728_3_0_6"/>
<dbReference type="UniPathway" id="UPA00142">
    <property type="reaction ID" value="UER00209"/>
</dbReference>
<dbReference type="Proteomes" id="UP000001599">
    <property type="component" value="Chromosome"/>
</dbReference>
<dbReference type="GO" id="GO:0005829">
    <property type="term" value="C:cytosol"/>
    <property type="evidence" value="ECO:0007669"/>
    <property type="project" value="TreeGrafter"/>
</dbReference>
<dbReference type="GO" id="GO:0005524">
    <property type="term" value="F:ATP binding"/>
    <property type="evidence" value="ECO:0007669"/>
    <property type="project" value="UniProtKB-KW"/>
</dbReference>
<dbReference type="GO" id="GO:0004357">
    <property type="term" value="F:glutamate-cysteine ligase activity"/>
    <property type="evidence" value="ECO:0007669"/>
    <property type="project" value="UniProtKB-UniRule"/>
</dbReference>
<dbReference type="GO" id="GO:0046872">
    <property type="term" value="F:metal ion binding"/>
    <property type="evidence" value="ECO:0007669"/>
    <property type="project" value="TreeGrafter"/>
</dbReference>
<dbReference type="GO" id="GO:0006750">
    <property type="term" value="P:glutathione biosynthetic process"/>
    <property type="evidence" value="ECO:0007669"/>
    <property type="project" value="UniProtKB-UniRule"/>
</dbReference>
<dbReference type="FunFam" id="3.30.590.20:FF:000001">
    <property type="entry name" value="Glutamate--cysteine ligase"/>
    <property type="match status" value="1"/>
</dbReference>
<dbReference type="Gene3D" id="3.30.590.20">
    <property type="match status" value="1"/>
</dbReference>
<dbReference type="HAMAP" id="MF_00578">
    <property type="entry name" value="Glu_cys_ligase"/>
    <property type="match status" value="1"/>
</dbReference>
<dbReference type="InterPro" id="IPR014746">
    <property type="entry name" value="Gln_synth/guanido_kin_cat_dom"/>
</dbReference>
<dbReference type="InterPro" id="IPR007370">
    <property type="entry name" value="Glu_cys_ligase"/>
</dbReference>
<dbReference type="InterPro" id="IPR006334">
    <property type="entry name" value="Glut_cys_ligase"/>
</dbReference>
<dbReference type="NCBIfam" id="TIGR01434">
    <property type="entry name" value="glu_cys_ligase"/>
    <property type="match status" value="1"/>
</dbReference>
<dbReference type="PANTHER" id="PTHR38761">
    <property type="entry name" value="GLUTAMATE--CYSTEINE LIGASE"/>
    <property type="match status" value="1"/>
</dbReference>
<dbReference type="PANTHER" id="PTHR38761:SF1">
    <property type="entry name" value="GLUTAMATE--CYSTEINE LIGASE"/>
    <property type="match status" value="1"/>
</dbReference>
<dbReference type="Pfam" id="PF04262">
    <property type="entry name" value="Glu_cys_ligase"/>
    <property type="match status" value="1"/>
</dbReference>
<dbReference type="SUPFAM" id="SSF55931">
    <property type="entry name" value="Glutamine synthetase/guanido kinase"/>
    <property type="match status" value="1"/>
</dbReference>